<proteinExistence type="evidence at protein level"/>
<sequence length="356" mass="40141">MADAAVIEKLEAGFKKLEAATDCKSLLKKYLSKAVFDQLKEKKTSLGATLLDVIQSGVENLDSGVGIYAPDAEAYTLFSPLFDPIIEDYHVGFKQTDKHPNKDFGDVNTFVNVDPEGKYVISTRVRCGRSMEGYPFNPCLTEAQYKEMEAKVSSTLSSLEGELKGTYYPLTGMSKEVQQKLIDDHFLFKEGDRFLQAANACRYWPAGRGIYHNDNKTFLVWVNEEDHLRIISMQMGGDLGQVFRRLTSAVNEIEKRIPFSHHDRLGFLTFCPTNLGTTVRASVHIKLPKLAANREKLEEVAGKYNLQVRGTRGEHTEAEGGIYDISNKRRMGLTEFQAVKEMQDGILELIKMEKEM</sequence>
<keyword id="KW-0007">Acetylation</keyword>
<keyword id="KW-0020">Allergen</keyword>
<keyword id="KW-0067">ATP-binding</keyword>
<keyword id="KW-0903">Direct protein sequencing</keyword>
<keyword id="KW-0418">Kinase</keyword>
<keyword id="KW-0547">Nucleotide-binding</keyword>
<keyword id="KW-0808">Transferase</keyword>
<feature type="initiator methionine" description="Removed" evidence="5">
    <location>
        <position position="1"/>
    </location>
</feature>
<feature type="chain" id="PRO_0000398786" description="Arginine kinase" evidence="5">
    <location>
        <begin position="2"/>
        <end position="356"/>
    </location>
</feature>
<feature type="domain" description="Phosphagen kinase N-terminal" evidence="3">
    <location>
        <begin position="9"/>
        <end position="91"/>
    </location>
</feature>
<feature type="domain" description="Phosphagen kinase C-terminal" evidence="4">
    <location>
        <begin position="119"/>
        <end position="356"/>
    </location>
</feature>
<feature type="binding site" evidence="2">
    <location>
        <begin position="64"/>
        <end position="68"/>
    </location>
    <ligand>
        <name>L-arginine</name>
        <dbReference type="ChEBI" id="CHEBI:32682"/>
    </ligand>
</feature>
<feature type="binding site" evidence="1 4">
    <location>
        <begin position="122"/>
        <end position="126"/>
    </location>
    <ligand>
        <name>ATP</name>
        <dbReference type="ChEBI" id="CHEBI:30616"/>
    </ligand>
</feature>
<feature type="binding site" evidence="1 4">
    <location>
        <position position="185"/>
    </location>
    <ligand>
        <name>ATP</name>
        <dbReference type="ChEBI" id="CHEBI:30616"/>
    </ligand>
</feature>
<feature type="binding site" evidence="2">
    <location>
        <position position="225"/>
    </location>
    <ligand>
        <name>L-arginine</name>
        <dbReference type="ChEBI" id="CHEBI:32682"/>
    </ligand>
</feature>
<feature type="binding site" evidence="1 4">
    <location>
        <position position="229"/>
    </location>
    <ligand>
        <name>ATP</name>
        <dbReference type="ChEBI" id="CHEBI:30616"/>
    </ligand>
</feature>
<feature type="binding site" evidence="2">
    <location>
        <position position="271"/>
    </location>
    <ligand>
        <name>L-arginine</name>
        <dbReference type="ChEBI" id="CHEBI:32682"/>
    </ligand>
</feature>
<feature type="binding site" evidence="1 4">
    <location>
        <begin position="280"/>
        <end position="284"/>
    </location>
    <ligand>
        <name>ATP</name>
        <dbReference type="ChEBI" id="CHEBI:30616"/>
    </ligand>
</feature>
<feature type="binding site" evidence="1 4">
    <location>
        <begin position="309"/>
        <end position="314"/>
    </location>
    <ligand>
        <name>ATP</name>
        <dbReference type="ChEBI" id="CHEBI:30616"/>
    </ligand>
</feature>
<feature type="binding site" evidence="2">
    <location>
        <position position="314"/>
    </location>
    <ligand>
        <name>L-arginine</name>
        <dbReference type="ChEBI" id="CHEBI:32682"/>
    </ligand>
</feature>
<feature type="modified residue" description="N-acetylalanine" evidence="5">
    <location>
        <position position="2"/>
    </location>
</feature>
<feature type="sequence conflict" description="In Ref. 1; AAO15713." evidence="10" ref="1">
    <original>V</original>
    <variation>A</variation>
    <location>
        <position position="279"/>
    </location>
</feature>
<evidence type="ECO:0000250" key="1">
    <source>
        <dbReference type="UniProtKB" id="P51541"/>
    </source>
</evidence>
<evidence type="ECO:0000250" key="2">
    <source>
        <dbReference type="UniProtKB" id="Q004B5"/>
    </source>
</evidence>
<evidence type="ECO:0000255" key="3">
    <source>
        <dbReference type="PROSITE-ProRule" id="PRU00842"/>
    </source>
</evidence>
<evidence type="ECO:0000255" key="4">
    <source>
        <dbReference type="PROSITE-ProRule" id="PRU00843"/>
    </source>
</evidence>
<evidence type="ECO:0000269" key="5">
    <source>
    </source>
</evidence>
<evidence type="ECO:0000269" key="6">
    <source ref="2"/>
</evidence>
<evidence type="ECO:0000269" key="7">
    <source ref="3"/>
</evidence>
<evidence type="ECO:0000303" key="8">
    <source>
    </source>
</evidence>
<evidence type="ECO:0000303" key="9">
    <source ref="2"/>
</evidence>
<evidence type="ECO:0000305" key="10"/>
<evidence type="ECO:0000312" key="11">
    <source>
        <dbReference type="EMBL" id="AAO15713.1"/>
    </source>
</evidence>
<evidence type="ECO:0000312" key="12">
    <source>
        <dbReference type="EMBL" id="ACT34086.1"/>
    </source>
</evidence>
<comment type="catalytic activity">
    <reaction evidence="5">
        <text>L-arginine + ATP = N(omega)-phospho-L-arginine + ADP + H(+)</text>
        <dbReference type="Rhea" id="RHEA:22940"/>
        <dbReference type="ChEBI" id="CHEBI:15378"/>
        <dbReference type="ChEBI" id="CHEBI:30616"/>
        <dbReference type="ChEBI" id="CHEBI:32682"/>
        <dbReference type="ChEBI" id="CHEBI:58477"/>
        <dbReference type="ChEBI" id="CHEBI:456216"/>
        <dbReference type="EC" id="2.7.3.3"/>
    </reaction>
</comment>
<comment type="allergen">
    <text evidence="5 6 7">Causes an allergic reaction in human.</text>
</comment>
<comment type="similarity">
    <text evidence="3 4">Belongs to the ATP:guanido phosphotransferase family.</text>
</comment>
<reference evidence="10 11" key="1">
    <citation type="journal article" date="2003" name="J. Immunol.">
        <title>Proteomics and immunological analysis of a novel shrimp allergen, Pen m 2.</title>
        <authorList>
            <person name="Yu C.J."/>
            <person name="Lin Y.F."/>
            <person name="Chiang B.L."/>
            <person name="Chow L.P."/>
        </authorList>
    </citation>
    <scope>NUCLEOTIDE SEQUENCE [MRNA]</scope>
    <scope>PROTEIN SEQUENCE OF 2-9 AND 257-264</scope>
    <scope>CATALYTIC ACTIVITY</scope>
    <scope>ALLERGEN</scope>
    <scope>ACETYLATION AT ALA-2</scope>
    <source>
        <tissue evidence="11">Muscle</tissue>
    </source>
</reference>
<reference evidence="12" key="2">
    <citation type="submission" date="2009-06" db="EMBL/GenBank/DDBJ databases">
        <title>Isolation and characterization of arginine kinase from Penaeus monodon.</title>
        <authorList>
            <person name="Wong J."/>
            <person name="Chew F.T."/>
        </authorList>
    </citation>
    <scope>NUCLEOTIDE SEQUENCE [MRNA]</scope>
</reference>
<reference evidence="10" key="3">
    <citation type="journal article" date="2010" name="Rapid Commun. Mass Spectrom.">
        <title>Analysis of the allergenic proteins in black tiger prawn (Penaeus monodon) and characterization of the major allergen tropomyosin using mass spectrometry.</title>
        <authorList>
            <person name="Abdel Rahman A.M."/>
            <person name="Kamath S."/>
            <person name="Lopata A.L."/>
            <person name="Helleur R.J."/>
        </authorList>
    </citation>
    <scope>PROTEIN SEQUENCE OF 34-42; 152-175; 181-189; 230-264 AND 310-328</scope>
    <scope>ALLERGENICITY</scope>
    <source>
        <tissue evidence="6">Muscle</tissue>
    </source>
</reference>
<dbReference type="EC" id="2.7.3.3"/>
<dbReference type="EMBL" id="AF479772">
    <property type="protein sequence ID" value="AAO15713.1"/>
    <property type="molecule type" value="mRNA"/>
</dbReference>
<dbReference type="EMBL" id="GQ246164">
    <property type="protein sequence ID" value="ACT34086.1"/>
    <property type="molecule type" value="mRNA"/>
</dbReference>
<dbReference type="SMR" id="C7E3T4"/>
<dbReference type="Allergome" id="3411">
    <property type="allergen name" value="Pen m 2.0101"/>
</dbReference>
<dbReference type="Allergome" id="792">
    <property type="allergen name" value="Pen m 2"/>
</dbReference>
<dbReference type="iPTMnet" id="C7E3T4"/>
<dbReference type="EnsemblMetazoa" id="XM_037939987.1">
    <property type="protein sequence ID" value="XP_037795915.1"/>
    <property type="gene ID" value="LOC119591270"/>
</dbReference>
<dbReference type="OrthoDB" id="430219at2759"/>
<dbReference type="GO" id="GO:0005615">
    <property type="term" value="C:extracellular space"/>
    <property type="evidence" value="ECO:0007669"/>
    <property type="project" value="TreeGrafter"/>
</dbReference>
<dbReference type="GO" id="GO:0004054">
    <property type="term" value="F:arginine kinase activity"/>
    <property type="evidence" value="ECO:0000314"/>
    <property type="project" value="UniProtKB"/>
</dbReference>
<dbReference type="GO" id="GO:0005524">
    <property type="term" value="F:ATP binding"/>
    <property type="evidence" value="ECO:0007669"/>
    <property type="project" value="UniProtKB-KW"/>
</dbReference>
<dbReference type="GO" id="GO:0004111">
    <property type="term" value="F:creatine kinase activity"/>
    <property type="evidence" value="ECO:0007669"/>
    <property type="project" value="InterPro"/>
</dbReference>
<dbReference type="GO" id="GO:0046314">
    <property type="term" value="P:phosphocreatine biosynthetic process"/>
    <property type="evidence" value="ECO:0007669"/>
    <property type="project" value="InterPro"/>
</dbReference>
<dbReference type="GO" id="GO:0016310">
    <property type="term" value="P:phosphorylation"/>
    <property type="evidence" value="ECO:0000314"/>
    <property type="project" value="UniProtKB"/>
</dbReference>
<dbReference type="CDD" id="cd07932">
    <property type="entry name" value="arginine_kinase_like"/>
    <property type="match status" value="1"/>
</dbReference>
<dbReference type="FunFam" id="3.30.590.10:FF:000006">
    <property type="entry name" value="Arginine kinase 1"/>
    <property type="match status" value="1"/>
</dbReference>
<dbReference type="FunFam" id="1.10.135.10:FF:000003">
    <property type="entry name" value="Three-domain arginine kinase"/>
    <property type="match status" value="1"/>
</dbReference>
<dbReference type="Gene3D" id="1.10.135.10">
    <property type="entry name" value="ATP:guanido phosphotransferase, N-terminal domain"/>
    <property type="match status" value="1"/>
</dbReference>
<dbReference type="Gene3D" id="3.30.590.10">
    <property type="entry name" value="Glutamine synthetase/guanido kinase, catalytic domain"/>
    <property type="match status" value="1"/>
</dbReference>
<dbReference type="InterPro" id="IPR000749">
    <property type="entry name" value="ATP-guanido_PTrfase"/>
</dbReference>
<dbReference type="InterPro" id="IPR022415">
    <property type="entry name" value="ATP-guanido_PTrfase_AS"/>
</dbReference>
<dbReference type="InterPro" id="IPR022414">
    <property type="entry name" value="ATP-guanido_PTrfase_cat"/>
</dbReference>
<dbReference type="InterPro" id="IPR022413">
    <property type="entry name" value="ATP-guanido_PTrfase_N"/>
</dbReference>
<dbReference type="InterPro" id="IPR036802">
    <property type="entry name" value="ATP-guanido_PTrfase_N_sf"/>
</dbReference>
<dbReference type="InterPro" id="IPR014746">
    <property type="entry name" value="Gln_synth/guanido_kin_cat_dom"/>
</dbReference>
<dbReference type="PANTHER" id="PTHR11547:SF38">
    <property type="entry name" value="ARGININE KINASE 1-RELATED"/>
    <property type="match status" value="1"/>
</dbReference>
<dbReference type="PANTHER" id="PTHR11547">
    <property type="entry name" value="ARGININE OR CREATINE KINASE"/>
    <property type="match status" value="1"/>
</dbReference>
<dbReference type="Pfam" id="PF00217">
    <property type="entry name" value="ATP-gua_Ptrans"/>
    <property type="match status" value="1"/>
</dbReference>
<dbReference type="Pfam" id="PF02807">
    <property type="entry name" value="ATP-gua_PtransN"/>
    <property type="match status" value="1"/>
</dbReference>
<dbReference type="SUPFAM" id="SSF55931">
    <property type="entry name" value="Glutamine synthetase/guanido kinase"/>
    <property type="match status" value="1"/>
</dbReference>
<dbReference type="SUPFAM" id="SSF48034">
    <property type="entry name" value="Guanido kinase N-terminal domain"/>
    <property type="match status" value="1"/>
</dbReference>
<dbReference type="PROSITE" id="PS00112">
    <property type="entry name" value="PHOSPHAGEN_KINASE"/>
    <property type="match status" value="1"/>
</dbReference>
<dbReference type="PROSITE" id="PS51510">
    <property type="entry name" value="PHOSPHAGEN_KINASE_C"/>
    <property type="match status" value="1"/>
</dbReference>
<dbReference type="PROSITE" id="PS51509">
    <property type="entry name" value="PHOSPHAGEN_KINASE_N"/>
    <property type="match status" value="1"/>
</dbReference>
<protein>
    <recommendedName>
        <fullName evidence="9 12">Arginine kinase</fullName>
        <shortName evidence="1">AK</shortName>
        <ecNumber>2.7.3.3</ecNumber>
    </recommendedName>
    <allergenName evidence="8 11">Pen m 2</allergenName>
</protein>
<name>KARG_PENMO</name>
<accession>C7E3T4</accession>
<accession>Q8I9P7</accession>
<organism>
    <name type="scientific">Penaeus monodon</name>
    <name type="common">Giant tiger prawn</name>
    <dbReference type="NCBI Taxonomy" id="6687"/>
    <lineage>
        <taxon>Eukaryota</taxon>
        <taxon>Metazoa</taxon>
        <taxon>Ecdysozoa</taxon>
        <taxon>Arthropoda</taxon>
        <taxon>Crustacea</taxon>
        <taxon>Multicrustacea</taxon>
        <taxon>Malacostraca</taxon>
        <taxon>Eumalacostraca</taxon>
        <taxon>Eucarida</taxon>
        <taxon>Decapoda</taxon>
        <taxon>Dendrobranchiata</taxon>
        <taxon>Penaeoidea</taxon>
        <taxon>Penaeidae</taxon>
        <taxon>Penaeus</taxon>
    </lineage>
</organism>
<gene>
    <name evidence="11" type="primary">AK</name>
</gene>